<sequence>MGEVEISALAYVKMCLHAARYPHAAVNGLFLAPAPRSGECLCLTDCVPLFHSHLALSVMLEVALNQVDVWGAQAGLVVAGYYHANAAVNDQSPGPLALKIAGRIAEFFPDAVLIMLDNQKLVPQPRVPPVIVLENQGLRWVPKDKNLVMWRDWEESRQMVGALLEDRAHQHLVDFDCHLDDIRQDWTNQRLNTQITQWVGPTNGNGNA</sequence>
<accession>Q9Y3B6</accession>
<accession>D3DS60</accession>
<accession>Q9BUM3</accession>
<organism>
    <name type="scientific">Homo sapiens</name>
    <name type="common">Human</name>
    <dbReference type="NCBI Taxonomy" id="9606"/>
    <lineage>
        <taxon>Eukaryota</taxon>
        <taxon>Metazoa</taxon>
        <taxon>Chordata</taxon>
        <taxon>Craniata</taxon>
        <taxon>Vertebrata</taxon>
        <taxon>Euteleostomi</taxon>
        <taxon>Mammalia</taxon>
        <taxon>Eutheria</taxon>
        <taxon>Euarchontoglires</taxon>
        <taxon>Primates</taxon>
        <taxon>Haplorrhini</taxon>
        <taxon>Catarrhini</taxon>
        <taxon>Hominidae</taxon>
        <taxon>Homo</taxon>
    </lineage>
</organism>
<protein>
    <recommendedName>
        <fullName>ER membrane protein complex subunit 9</fullName>
    </recommendedName>
    <alternativeName>
        <fullName>Protein FAM158A</fullName>
    </alternativeName>
</protein>
<name>EMC9_HUMAN</name>
<proteinExistence type="evidence at protein level"/>
<feature type="chain" id="PRO_0000221189" description="ER membrane protein complex subunit 9">
    <location>
        <begin position="1"/>
        <end position="208"/>
    </location>
</feature>
<feature type="domain" description="MPN" evidence="1">
    <location>
        <begin position="4"/>
        <end position="139"/>
    </location>
</feature>
<feature type="sequence variant" id="VAR_052532" description="In dbSNP:rs11574512.">
    <original>A</original>
    <variation>V</variation>
    <location>
        <position position="97"/>
    </location>
</feature>
<feature type="sequence conflict" description="In Ref. 1; AAD34107." evidence="7" ref="1">
    <original>ALA</original>
    <variation>GPG</variation>
    <location>
        <begin position="8"/>
        <end position="10"/>
    </location>
</feature>
<feature type="sequence conflict" description="In Ref. 1; AAD34107." evidence="7" ref="1">
    <original>PR</original>
    <variation>TG</variation>
    <location>
        <begin position="35"/>
        <end position="36"/>
    </location>
</feature>
<feature type="strand" evidence="11">
    <location>
        <begin position="4"/>
        <end position="6"/>
    </location>
</feature>
<feature type="helix" evidence="11">
    <location>
        <begin position="8"/>
        <end position="20"/>
    </location>
</feature>
<feature type="strand" evidence="11">
    <location>
        <begin position="26"/>
        <end position="32"/>
    </location>
</feature>
<feature type="strand" evidence="11">
    <location>
        <begin position="45"/>
        <end position="48"/>
    </location>
</feature>
<feature type="helix" evidence="11">
    <location>
        <begin position="58"/>
        <end position="73"/>
    </location>
</feature>
<feature type="strand" evidence="11">
    <location>
        <begin position="77"/>
        <end position="84"/>
    </location>
</feature>
<feature type="helix" evidence="11">
    <location>
        <begin position="95"/>
        <end position="107"/>
    </location>
</feature>
<feature type="strand" evidence="11">
    <location>
        <begin position="112"/>
        <end position="116"/>
    </location>
</feature>
<feature type="strand" evidence="11">
    <location>
        <begin position="120"/>
        <end position="123"/>
    </location>
</feature>
<feature type="strand" evidence="11">
    <location>
        <begin position="129"/>
        <end position="136"/>
    </location>
</feature>
<feature type="strand" evidence="11">
    <location>
        <begin position="139"/>
        <end position="142"/>
    </location>
</feature>
<feature type="helix" evidence="11">
    <location>
        <begin position="145"/>
        <end position="147"/>
    </location>
</feature>
<feature type="strand" evidence="11">
    <location>
        <begin position="148"/>
        <end position="150"/>
    </location>
</feature>
<feature type="helix" evidence="11">
    <location>
        <begin position="153"/>
        <end position="165"/>
    </location>
</feature>
<feature type="helix" evidence="11">
    <location>
        <begin position="168"/>
        <end position="171"/>
    </location>
</feature>
<feature type="helix" evidence="11">
    <location>
        <begin position="175"/>
        <end position="180"/>
    </location>
</feature>
<gene>
    <name type="primary">EMC9</name>
    <name type="synonym">C14orf122</name>
    <name type="synonym">FAM158A</name>
    <name type="ORF">CGI-112</name>
</gene>
<reference key="1">
    <citation type="journal article" date="2000" name="Genome Res.">
        <title>Identification of novel human genes evolutionarily conserved in Caenorhabditis elegans by comparative proteomics.</title>
        <authorList>
            <person name="Lai C.-H."/>
            <person name="Chou C.-Y."/>
            <person name="Ch'ang L.-Y."/>
            <person name="Liu C.-S."/>
            <person name="Lin W.-C."/>
        </authorList>
    </citation>
    <scope>NUCLEOTIDE SEQUENCE [LARGE SCALE MRNA]</scope>
</reference>
<reference key="2">
    <citation type="submission" date="2005-09" db="EMBL/GenBank/DDBJ databases">
        <authorList>
            <person name="Mural R.J."/>
            <person name="Istrail S."/>
            <person name="Sutton G.G."/>
            <person name="Florea L."/>
            <person name="Halpern A.L."/>
            <person name="Mobarry C.M."/>
            <person name="Lippert R."/>
            <person name="Walenz B."/>
            <person name="Shatkay H."/>
            <person name="Dew I."/>
            <person name="Miller J.R."/>
            <person name="Flanigan M.J."/>
            <person name="Edwards N.J."/>
            <person name="Bolanos R."/>
            <person name="Fasulo D."/>
            <person name="Halldorsson B.V."/>
            <person name="Hannenhalli S."/>
            <person name="Turner R."/>
            <person name="Yooseph S."/>
            <person name="Lu F."/>
            <person name="Nusskern D.R."/>
            <person name="Shue B.C."/>
            <person name="Zheng X.H."/>
            <person name="Zhong F."/>
            <person name="Delcher A.L."/>
            <person name="Huson D.H."/>
            <person name="Kravitz S.A."/>
            <person name="Mouchard L."/>
            <person name="Reinert K."/>
            <person name="Remington K.A."/>
            <person name="Clark A.G."/>
            <person name="Waterman M.S."/>
            <person name="Eichler E.E."/>
            <person name="Adams M.D."/>
            <person name="Hunkapiller M.W."/>
            <person name="Myers E.W."/>
            <person name="Venter J.C."/>
        </authorList>
    </citation>
    <scope>NUCLEOTIDE SEQUENCE [LARGE SCALE GENOMIC DNA]</scope>
</reference>
<reference key="3">
    <citation type="journal article" date="2004" name="Genome Res.">
        <title>The status, quality, and expansion of the NIH full-length cDNA project: the Mammalian Gene Collection (MGC).</title>
        <authorList>
            <consortium name="The MGC Project Team"/>
        </authorList>
    </citation>
    <scope>NUCLEOTIDE SEQUENCE [LARGE SCALE MRNA]</scope>
    <source>
        <tissue>Skin</tissue>
    </source>
</reference>
<reference key="4">
    <citation type="journal article" date="2012" name="Nat. Cell Biol.">
        <title>Defining human ERAD networks through an integrative mapping strategy.</title>
        <authorList>
            <person name="Christianson J.C."/>
            <person name="Olzmann J.A."/>
            <person name="Shaler T.A."/>
            <person name="Sowa M.E."/>
            <person name="Bennett E.J."/>
            <person name="Richter C.M."/>
            <person name="Tyler R.E."/>
            <person name="Greenblatt E.J."/>
            <person name="Harper J.W."/>
            <person name="Kopito R.R."/>
        </authorList>
    </citation>
    <scope>IDENTIFICATION IN THE EMC COMPLEX</scope>
    <scope>SUBCELLULAR LOCATION</scope>
</reference>
<reference key="5">
    <citation type="journal article" date="2018" name="Cell">
        <title>EMC Is Required to Initiate Accurate Membrane Protein Topogenesis.</title>
        <authorList>
            <person name="Chitwood P.J."/>
            <person name="Juszkiewicz S."/>
            <person name="Guna A."/>
            <person name="Shao S."/>
            <person name="Hegde R.S."/>
        </authorList>
    </citation>
    <scope>FUNCTION</scope>
</reference>
<reference key="6">
    <citation type="journal article" date="2018" name="Elife">
        <title>The ER membrane protein complex interacts cotranslationally to enable biogenesis of multipass membrane proteins.</title>
        <authorList>
            <person name="Shurtleff M.J."/>
            <person name="Itzhak D.N."/>
            <person name="Hussmann J.A."/>
            <person name="Schirle Oakdale N.T."/>
            <person name="Costa E.A."/>
            <person name="Jonikas M."/>
            <person name="Weibezahn J."/>
            <person name="Popova K.D."/>
            <person name="Jan C.H."/>
            <person name="Sinitcyn P."/>
            <person name="Vembar S.S."/>
            <person name="Hernandez H."/>
            <person name="Cox J."/>
            <person name="Burlingame A.L."/>
            <person name="Brodsky J.L."/>
            <person name="Frost A."/>
            <person name="Borner G.H."/>
            <person name="Weissman J.S."/>
        </authorList>
    </citation>
    <scope>FUNCTION</scope>
</reference>
<reference key="7">
    <citation type="journal article" date="2018" name="Science">
        <title>The ER membrane protein complex is a transmembrane domain insertase.</title>
        <authorList>
            <person name="Guna A."/>
            <person name="Volkmar N."/>
            <person name="Christianson J.C."/>
            <person name="Hegde R.S."/>
        </authorList>
    </citation>
    <scope>FUNCTION</scope>
    <scope>SUBUNIT</scope>
</reference>
<reference evidence="9 10" key="8">
    <citation type="journal article" date="2020" name="Elife">
        <title>The architecture of EMC reveals a path for membrane protein insertion.</title>
        <authorList>
            <person name="O'Donnell J.P."/>
            <person name="Phillips B.P."/>
            <person name="Yagita Y."/>
            <person name="Juszkiewicz S."/>
            <person name="Wagner A."/>
            <person name="Malinverni D."/>
            <person name="Keenan R.J."/>
            <person name="Miller E.A."/>
            <person name="Hegde R.S."/>
        </authorList>
    </citation>
    <scope>X-RAY CRYSTALLOGRAPHY (2.20 ANGSTROMS) OF 1-200 IN COMPLEX WITH EMC2</scope>
    <scope>STRUCTURE BY ELECTRON MICROSCOPY (6.40 ANGSTROMS) OF THE EMC COMPLEX</scope>
    <scope>FUNCTION</scope>
    <scope>SUBCELLULAR LOCATION</scope>
    <scope>TOPOLOGY</scope>
    <scope>INTERACTION WITH EMC2</scope>
</reference>
<evidence type="ECO:0000255" key="1">
    <source>
        <dbReference type="PROSITE-ProRule" id="PRU01182"/>
    </source>
</evidence>
<evidence type="ECO:0000269" key="2">
    <source>
    </source>
</evidence>
<evidence type="ECO:0000269" key="3">
    <source>
    </source>
</evidence>
<evidence type="ECO:0000269" key="4">
    <source>
    </source>
</evidence>
<evidence type="ECO:0000269" key="5">
    <source>
    </source>
</evidence>
<evidence type="ECO:0000269" key="6">
    <source>
    </source>
</evidence>
<evidence type="ECO:0000305" key="7"/>
<evidence type="ECO:0000305" key="8">
    <source>
    </source>
</evidence>
<evidence type="ECO:0007744" key="9">
    <source>
        <dbReference type="PDB" id="6Y4L"/>
    </source>
</evidence>
<evidence type="ECO:0007744" key="10">
    <source>
        <dbReference type="PDB" id="6Z3W"/>
    </source>
</evidence>
<evidence type="ECO:0007829" key="11">
    <source>
        <dbReference type="PDB" id="6Y4L"/>
    </source>
</evidence>
<comment type="function">
    <text evidence="3 4 5 6 7">Part of the endoplasmic reticulum membrane protein complex (EMC) that enables the energy-independent insertion into endoplasmic reticulum membranes of newly synthesized membrane proteins (PubMed:29242231, PubMed:29809151, PubMed:30415835, PubMed:32459176). Preferentially accommodates proteins with transmembrane domains that are weakly hydrophobic or contain destabilizing features such as charged and aromatic residues (PubMed:29242231, PubMed:29809151, PubMed:30415835). Involved in the cotranslational insertion of multi-pass membrane proteins in which stop-transfer membrane-anchor sequences become ER membrane spanning helices (PubMed:29809151, PubMed:30415835). It is also required for the post-translational insertion of tail-anchored/TA proteins in endoplasmic reticulum membranes (PubMed:29242231, PubMed:29809151). By mediating the proper cotranslational insertion of N-terminal transmembrane domains in an N-exo topology, with translocated N-terminus in the lumen of the ER, controls the topology of multi-pass membrane proteins like the G protein-coupled receptors (PubMed:30415835). By regulating the insertion of various proteins in membranes, it is indirectly involved in many cellular processes (Probable).</text>
</comment>
<comment type="subunit">
    <text evidence="2 3 6">Component of the ER membrane protein complex (EMC) (PubMed:22119785, PubMed:29242231, PubMed:32459176). EMC8 and EMC9 are mutually exclusive subunits of the EMC complex (PubMed:32459176).</text>
</comment>
<comment type="interaction">
    <interactant intactId="EBI-748366">
        <id>Q9Y3B6</id>
    </interactant>
    <interactant intactId="EBI-359031">
        <id>Q15006</id>
        <label>EMC2</label>
    </interactant>
    <organismsDiffer>false</organismsDiffer>
    <experiments>14</experiments>
</comment>
<comment type="interaction">
    <interactant intactId="EBI-748366">
        <id>Q9Y3B6</id>
    </interactant>
    <interactant intactId="EBI-14276801">
        <id>Q14524-3</id>
        <label>SCN5A</label>
    </interactant>
    <organismsDiffer>false</organismsDiffer>
    <experiments>3</experiments>
</comment>
<comment type="subcellular location">
    <subcellularLocation>
        <location evidence="8">Endoplasmic reticulum membrane</location>
        <topology evidence="8">Peripheral membrane protein</topology>
        <orientation evidence="2">Cytoplasmic side</orientation>
    </subcellularLocation>
</comment>
<comment type="similarity">
    <text evidence="7">Belongs to the EMC8/EMC9 family.</text>
</comment>
<dbReference type="EMBL" id="AF151870">
    <property type="protein sequence ID" value="AAD34107.1"/>
    <property type="molecule type" value="mRNA"/>
</dbReference>
<dbReference type="EMBL" id="CH471078">
    <property type="protein sequence ID" value="EAW66103.1"/>
    <property type="molecule type" value="Genomic_DNA"/>
</dbReference>
<dbReference type="EMBL" id="CH471078">
    <property type="protein sequence ID" value="EAW66104.1"/>
    <property type="molecule type" value="Genomic_DNA"/>
</dbReference>
<dbReference type="EMBL" id="BC002491">
    <property type="protein sequence ID" value="AAH02491.1"/>
    <property type="molecule type" value="mRNA"/>
</dbReference>
<dbReference type="CCDS" id="CCDS9613.1"/>
<dbReference type="RefSeq" id="NP_057133.2">
    <property type="nucleotide sequence ID" value="NM_016049.3"/>
</dbReference>
<dbReference type="RefSeq" id="XP_005267778.1">
    <property type="nucleotide sequence ID" value="XM_005267721.6"/>
</dbReference>
<dbReference type="RefSeq" id="XP_054188321.1">
    <property type="nucleotide sequence ID" value="XM_054332346.1"/>
</dbReference>
<dbReference type="RefSeq" id="XP_054232134.1">
    <property type="nucleotide sequence ID" value="XM_054376159.1"/>
</dbReference>
<dbReference type="PDB" id="6Y4L">
    <property type="method" value="X-ray"/>
    <property type="resolution" value="2.20 A"/>
    <property type="chains" value="B=1-200"/>
</dbReference>
<dbReference type="PDB" id="6Z3W">
    <property type="method" value="EM"/>
    <property type="resolution" value="6.40 A"/>
    <property type="chains" value="H=1-208"/>
</dbReference>
<dbReference type="PDBsum" id="6Y4L"/>
<dbReference type="PDBsum" id="6Z3W"/>
<dbReference type="SMR" id="Q9Y3B6"/>
<dbReference type="BioGRID" id="119223">
    <property type="interactions" value="168"/>
</dbReference>
<dbReference type="ComplexPortal" id="CPX-5881">
    <property type="entry name" value="Endoplasmic reticulum membrane complex, EMC9 variant"/>
</dbReference>
<dbReference type="CORUM" id="Q9Y3B6"/>
<dbReference type="FunCoup" id="Q9Y3B6">
    <property type="interactions" value="848"/>
</dbReference>
<dbReference type="IntAct" id="Q9Y3B6">
    <property type="interactions" value="156"/>
</dbReference>
<dbReference type="MINT" id="Q9Y3B6"/>
<dbReference type="STRING" id="9606.ENSP00000403210"/>
<dbReference type="TCDB" id="3.A.27.1.1">
    <property type="family name" value="the endoplasmic reticulum membrane protein insertion complex (emc) family"/>
</dbReference>
<dbReference type="GlyGen" id="Q9Y3B6">
    <property type="glycosylation" value="1 site"/>
</dbReference>
<dbReference type="iPTMnet" id="Q9Y3B6"/>
<dbReference type="PhosphoSitePlus" id="Q9Y3B6"/>
<dbReference type="BioMuta" id="EMC9"/>
<dbReference type="DMDM" id="116241305"/>
<dbReference type="jPOST" id="Q9Y3B6"/>
<dbReference type="MassIVE" id="Q9Y3B6"/>
<dbReference type="PaxDb" id="9606-ENSP00000403210"/>
<dbReference type="PeptideAtlas" id="Q9Y3B6"/>
<dbReference type="ProteomicsDB" id="86003"/>
<dbReference type="Pumba" id="Q9Y3B6"/>
<dbReference type="Antibodypedia" id="55830">
    <property type="antibodies" value="42 antibodies from 12 providers"/>
</dbReference>
<dbReference type="DNASU" id="51016"/>
<dbReference type="Ensembl" id="ENST00000216799.9">
    <property type="protein sequence ID" value="ENSP00000216799.4"/>
    <property type="gene ID" value="ENSG00000100908.14"/>
</dbReference>
<dbReference type="Ensembl" id="ENST00000419198.6">
    <property type="protein sequence ID" value="ENSP00000403210.2"/>
    <property type="gene ID" value="ENSG00000100908.14"/>
</dbReference>
<dbReference type="Ensembl" id="ENST00000642147.1">
    <property type="protein sequence ID" value="ENSP00000494976.1"/>
    <property type="gene ID" value="ENSG00000285377.2"/>
</dbReference>
<dbReference type="Ensembl" id="ENST00000646772.2">
    <property type="protein sequence ID" value="ENSP00000495623.1"/>
    <property type="gene ID" value="ENSG00000285377.2"/>
</dbReference>
<dbReference type="GeneID" id="51016"/>
<dbReference type="KEGG" id="hsa:51016"/>
<dbReference type="MANE-Select" id="ENST00000216799.9">
    <property type="protein sequence ID" value="ENSP00000216799.4"/>
    <property type="RefSeq nucleotide sequence ID" value="NM_016049.4"/>
    <property type="RefSeq protein sequence ID" value="NP_057133.2"/>
</dbReference>
<dbReference type="UCSC" id="uc001wmi.3">
    <property type="organism name" value="human"/>
</dbReference>
<dbReference type="AGR" id="HGNC:20273"/>
<dbReference type="CTD" id="51016"/>
<dbReference type="GeneCards" id="EMC9"/>
<dbReference type="HGNC" id="HGNC:20273">
    <property type="gene designation" value="EMC9"/>
</dbReference>
<dbReference type="HPA" id="ENSG00000100908">
    <property type="expression patterns" value="Low tissue specificity"/>
</dbReference>
<dbReference type="neXtProt" id="NX_Q9Y3B6"/>
<dbReference type="OpenTargets" id="ENSG00000100908"/>
<dbReference type="PharmGKB" id="PA162386700"/>
<dbReference type="VEuPathDB" id="HostDB:ENSG00000100908"/>
<dbReference type="eggNOG" id="KOG3289">
    <property type="taxonomic scope" value="Eukaryota"/>
</dbReference>
<dbReference type="GeneTree" id="ENSGT00390000006738"/>
<dbReference type="HOGENOM" id="CLU_087337_0_1_1"/>
<dbReference type="InParanoid" id="Q9Y3B6"/>
<dbReference type="OMA" id="CLSDCVP"/>
<dbReference type="OrthoDB" id="194468at2759"/>
<dbReference type="PAN-GO" id="Q9Y3B6">
    <property type="GO annotations" value="1 GO annotation based on evolutionary models"/>
</dbReference>
<dbReference type="PhylomeDB" id="Q9Y3B6"/>
<dbReference type="TreeFam" id="TF313860"/>
<dbReference type="PathwayCommons" id="Q9Y3B6"/>
<dbReference type="SignaLink" id="Q9Y3B6"/>
<dbReference type="BioGRID-ORCS" id="51016">
    <property type="hits" value="15 hits in 1158 CRISPR screens"/>
</dbReference>
<dbReference type="ChiTaRS" id="EMC9">
    <property type="organism name" value="human"/>
</dbReference>
<dbReference type="GeneWiki" id="Fam158a"/>
<dbReference type="GenomeRNAi" id="51016"/>
<dbReference type="Pharos" id="Q9Y3B6">
    <property type="development level" value="Tdark"/>
</dbReference>
<dbReference type="PRO" id="PR:Q9Y3B6"/>
<dbReference type="Proteomes" id="UP000005640">
    <property type="component" value="Chromosome 14"/>
</dbReference>
<dbReference type="RNAct" id="Q9Y3B6">
    <property type="molecule type" value="protein"/>
</dbReference>
<dbReference type="Bgee" id="ENSG00000100908">
    <property type="expression patterns" value="Expressed in pituitary gland and 99 other cell types or tissues"/>
</dbReference>
<dbReference type="ExpressionAtlas" id="Q9Y3B6">
    <property type="expression patterns" value="baseline and differential"/>
</dbReference>
<dbReference type="GO" id="GO:0005737">
    <property type="term" value="C:cytoplasm"/>
    <property type="evidence" value="ECO:0000314"/>
    <property type="project" value="UniProtKB"/>
</dbReference>
<dbReference type="GO" id="GO:0072546">
    <property type="term" value="C:EMC complex"/>
    <property type="evidence" value="ECO:0000314"/>
    <property type="project" value="UniProtKB"/>
</dbReference>
<dbReference type="GO" id="GO:0005789">
    <property type="term" value="C:endoplasmic reticulum membrane"/>
    <property type="evidence" value="ECO:0000303"/>
    <property type="project" value="ComplexPortal"/>
</dbReference>
<dbReference type="GO" id="GO:0045050">
    <property type="term" value="P:protein insertion into ER membrane by stop-transfer membrane-anchor sequence"/>
    <property type="evidence" value="ECO:0000314"/>
    <property type="project" value="ComplexPortal"/>
</dbReference>
<dbReference type="GO" id="GO:0071816">
    <property type="term" value="P:tail-anchored membrane protein insertion into ER membrane"/>
    <property type="evidence" value="ECO:0000314"/>
    <property type="project" value="UniProtKB"/>
</dbReference>
<dbReference type="CDD" id="cd08060">
    <property type="entry name" value="MPN_UPF0172"/>
    <property type="match status" value="1"/>
</dbReference>
<dbReference type="InterPro" id="IPR005366">
    <property type="entry name" value="EMC8/9"/>
</dbReference>
<dbReference type="InterPro" id="IPR037518">
    <property type="entry name" value="MPN"/>
</dbReference>
<dbReference type="PANTHER" id="PTHR12941">
    <property type="entry name" value="ER MEMBRANE PROTEIN COMPLEX"/>
    <property type="match status" value="1"/>
</dbReference>
<dbReference type="PANTHER" id="PTHR12941:SF12">
    <property type="entry name" value="ER MEMBRANE PROTEIN COMPLEX SUBUNIT 9"/>
    <property type="match status" value="1"/>
</dbReference>
<dbReference type="Pfam" id="PF03665">
    <property type="entry name" value="UPF0172"/>
    <property type="match status" value="1"/>
</dbReference>
<dbReference type="PROSITE" id="PS50249">
    <property type="entry name" value="MPN"/>
    <property type="match status" value="1"/>
</dbReference>
<keyword id="KW-0002">3D-structure</keyword>
<keyword id="KW-0256">Endoplasmic reticulum</keyword>
<keyword id="KW-0472">Membrane</keyword>
<keyword id="KW-1267">Proteomics identification</keyword>
<keyword id="KW-1185">Reference proteome</keyword>